<comment type="function">
    <text evidence="1">Catalyzes the formation of methylglyoxal from dihydroxyacetone phosphate.</text>
</comment>
<comment type="catalytic activity">
    <reaction evidence="1">
        <text>dihydroxyacetone phosphate = methylglyoxal + phosphate</text>
        <dbReference type="Rhea" id="RHEA:17937"/>
        <dbReference type="ChEBI" id="CHEBI:17158"/>
        <dbReference type="ChEBI" id="CHEBI:43474"/>
        <dbReference type="ChEBI" id="CHEBI:57642"/>
        <dbReference type="EC" id="4.2.3.3"/>
    </reaction>
</comment>
<comment type="similarity">
    <text evidence="1">Belongs to the methylglyoxal synthase family.</text>
</comment>
<feature type="chain" id="PRO_1000128988" description="Methylglyoxal synthase">
    <location>
        <begin position="1"/>
        <end position="152"/>
    </location>
</feature>
<feature type="domain" description="MGS-like" evidence="1">
    <location>
        <begin position="6"/>
        <end position="152"/>
    </location>
</feature>
<feature type="active site" description="Proton donor/acceptor" evidence="1">
    <location>
        <position position="71"/>
    </location>
</feature>
<feature type="binding site" evidence="1">
    <location>
        <position position="19"/>
    </location>
    <ligand>
        <name>substrate</name>
    </ligand>
</feature>
<feature type="binding site" evidence="1">
    <location>
        <position position="23"/>
    </location>
    <ligand>
        <name>substrate</name>
    </ligand>
</feature>
<feature type="binding site" evidence="1">
    <location>
        <begin position="45"/>
        <end position="48"/>
    </location>
    <ligand>
        <name>substrate</name>
    </ligand>
</feature>
<feature type="binding site" evidence="1">
    <location>
        <begin position="65"/>
        <end position="66"/>
    </location>
    <ligand>
        <name>substrate</name>
    </ligand>
</feature>
<feature type="binding site" evidence="1">
    <location>
        <position position="98"/>
    </location>
    <ligand>
        <name>substrate</name>
    </ligand>
</feature>
<gene>
    <name evidence="1" type="primary">mgsA</name>
    <name type="ordered locus">ECIAI39_2183</name>
</gene>
<keyword id="KW-0456">Lyase</keyword>
<sequence length="152" mass="16919">MELTTRTLPARKHIALVAHDHCKQMLMSWVERHQPLLEQHVLYATGTTGNLISRATGMNVNAMLSGPMGGDQQVGALISEGKIDVLIFFWDPLNAVPHDPDVKALLRLATVWNIPVATNVATADFIIQSPHFNDAVDILIPDYQRYLADRLK</sequence>
<protein>
    <recommendedName>
        <fullName evidence="1">Methylglyoxal synthase</fullName>
        <shortName evidence="1">MGS</shortName>
        <ecNumber evidence="1">4.2.3.3</ecNumber>
    </recommendedName>
</protein>
<reference key="1">
    <citation type="journal article" date="2009" name="PLoS Genet.">
        <title>Organised genome dynamics in the Escherichia coli species results in highly diverse adaptive paths.</title>
        <authorList>
            <person name="Touchon M."/>
            <person name="Hoede C."/>
            <person name="Tenaillon O."/>
            <person name="Barbe V."/>
            <person name="Baeriswyl S."/>
            <person name="Bidet P."/>
            <person name="Bingen E."/>
            <person name="Bonacorsi S."/>
            <person name="Bouchier C."/>
            <person name="Bouvet O."/>
            <person name="Calteau A."/>
            <person name="Chiapello H."/>
            <person name="Clermont O."/>
            <person name="Cruveiller S."/>
            <person name="Danchin A."/>
            <person name="Diard M."/>
            <person name="Dossat C."/>
            <person name="Karoui M.E."/>
            <person name="Frapy E."/>
            <person name="Garry L."/>
            <person name="Ghigo J.M."/>
            <person name="Gilles A.M."/>
            <person name="Johnson J."/>
            <person name="Le Bouguenec C."/>
            <person name="Lescat M."/>
            <person name="Mangenot S."/>
            <person name="Martinez-Jehanne V."/>
            <person name="Matic I."/>
            <person name="Nassif X."/>
            <person name="Oztas S."/>
            <person name="Petit M.A."/>
            <person name="Pichon C."/>
            <person name="Rouy Z."/>
            <person name="Ruf C.S."/>
            <person name="Schneider D."/>
            <person name="Tourret J."/>
            <person name="Vacherie B."/>
            <person name="Vallenet D."/>
            <person name="Medigue C."/>
            <person name="Rocha E.P.C."/>
            <person name="Denamur E."/>
        </authorList>
    </citation>
    <scope>NUCLEOTIDE SEQUENCE [LARGE SCALE GENOMIC DNA]</scope>
    <source>
        <strain>IAI39 / ExPEC</strain>
    </source>
</reference>
<accession>B7NLF4</accession>
<name>MGSA_ECO7I</name>
<proteinExistence type="inferred from homology"/>
<organism>
    <name type="scientific">Escherichia coli O7:K1 (strain IAI39 / ExPEC)</name>
    <dbReference type="NCBI Taxonomy" id="585057"/>
    <lineage>
        <taxon>Bacteria</taxon>
        <taxon>Pseudomonadati</taxon>
        <taxon>Pseudomonadota</taxon>
        <taxon>Gammaproteobacteria</taxon>
        <taxon>Enterobacterales</taxon>
        <taxon>Enterobacteriaceae</taxon>
        <taxon>Escherichia</taxon>
    </lineage>
</organism>
<dbReference type="EC" id="4.2.3.3" evidence="1"/>
<dbReference type="EMBL" id="CU928164">
    <property type="protein sequence ID" value="CAR18310.1"/>
    <property type="molecule type" value="Genomic_DNA"/>
</dbReference>
<dbReference type="RefSeq" id="WP_000424181.1">
    <property type="nucleotide sequence ID" value="NC_011750.1"/>
</dbReference>
<dbReference type="RefSeq" id="YP_002408146.1">
    <property type="nucleotide sequence ID" value="NC_011750.1"/>
</dbReference>
<dbReference type="SMR" id="B7NLF4"/>
<dbReference type="STRING" id="585057.ECIAI39_2183"/>
<dbReference type="GeneID" id="93776451"/>
<dbReference type="KEGG" id="ect:ECIAI39_2183"/>
<dbReference type="PATRIC" id="fig|585057.6.peg.2274"/>
<dbReference type="HOGENOM" id="CLU_120420_0_1_6"/>
<dbReference type="Proteomes" id="UP000000749">
    <property type="component" value="Chromosome"/>
</dbReference>
<dbReference type="GO" id="GO:0005829">
    <property type="term" value="C:cytosol"/>
    <property type="evidence" value="ECO:0007669"/>
    <property type="project" value="TreeGrafter"/>
</dbReference>
<dbReference type="GO" id="GO:0008929">
    <property type="term" value="F:methylglyoxal synthase activity"/>
    <property type="evidence" value="ECO:0007669"/>
    <property type="project" value="UniProtKB-UniRule"/>
</dbReference>
<dbReference type="GO" id="GO:0019242">
    <property type="term" value="P:methylglyoxal biosynthetic process"/>
    <property type="evidence" value="ECO:0007669"/>
    <property type="project" value="UniProtKB-UniRule"/>
</dbReference>
<dbReference type="CDD" id="cd01422">
    <property type="entry name" value="MGS"/>
    <property type="match status" value="1"/>
</dbReference>
<dbReference type="FunFam" id="3.40.50.1380:FF:000002">
    <property type="entry name" value="Methylglyoxal synthase"/>
    <property type="match status" value="1"/>
</dbReference>
<dbReference type="Gene3D" id="3.40.50.1380">
    <property type="entry name" value="Methylglyoxal synthase-like domain"/>
    <property type="match status" value="1"/>
</dbReference>
<dbReference type="HAMAP" id="MF_00549">
    <property type="entry name" value="Methylglyoxal_synth"/>
    <property type="match status" value="1"/>
</dbReference>
<dbReference type="InterPro" id="IPR004363">
    <property type="entry name" value="Methylgl_synth"/>
</dbReference>
<dbReference type="InterPro" id="IPR018148">
    <property type="entry name" value="Methylglyoxal_synth_AS"/>
</dbReference>
<dbReference type="InterPro" id="IPR011607">
    <property type="entry name" value="MGS-like_dom"/>
</dbReference>
<dbReference type="InterPro" id="IPR036914">
    <property type="entry name" value="MGS-like_dom_sf"/>
</dbReference>
<dbReference type="NCBIfam" id="TIGR00160">
    <property type="entry name" value="MGSA"/>
    <property type="match status" value="1"/>
</dbReference>
<dbReference type="NCBIfam" id="NF003559">
    <property type="entry name" value="PRK05234.1"/>
    <property type="match status" value="1"/>
</dbReference>
<dbReference type="PANTHER" id="PTHR30492">
    <property type="entry name" value="METHYLGLYOXAL SYNTHASE"/>
    <property type="match status" value="1"/>
</dbReference>
<dbReference type="PANTHER" id="PTHR30492:SF0">
    <property type="entry name" value="METHYLGLYOXAL SYNTHASE"/>
    <property type="match status" value="1"/>
</dbReference>
<dbReference type="Pfam" id="PF02142">
    <property type="entry name" value="MGS"/>
    <property type="match status" value="1"/>
</dbReference>
<dbReference type="PIRSF" id="PIRSF006614">
    <property type="entry name" value="Methylglyox_syn"/>
    <property type="match status" value="1"/>
</dbReference>
<dbReference type="SMART" id="SM00851">
    <property type="entry name" value="MGS"/>
    <property type="match status" value="1"/>
</dbReference>
<dbReference type="SUPFAM" id="SSF52335">
    <property type="entry name" value="Methylglyoxal synthase-like"/>
    <property type="match status" value="1"/>
</dbReference>
<dbReference type="PROSITE" id="PS01335">
    <property type="entry name" value="METHYLGLYOXAL_SYNTH"/>
    <property type="match status" value="1"/>
</dbReference>
<dbReference type="PROSITE" id="PS51855">
    <property type="entry name" value="MGS"/>
    <property type="match status" value="1"/>
</dbReference>
<evidence type="ECO:0000255" key="1">
    <source>
        <dbReference type="HAMAP-Rule" id="MF_00549"/>
    </source>
</evidence>